<evidence type="ECO:0000255" key="1">
    <source>
        <dbReference type="HAMAP-Rule" id="MF_00804"/>
    </source>
</evidence>
<feature type="chain" id="PRO_0000056555" description="Betaine aldehyde dehydrogenase">
    <location>
        <begin position="1"/>
        <end position="486"/>
    </location>
</feature>
<feature type="active site" description="Charge relay system" evidence="1">
    <location>
        <position position="159"/>
    </location>
</feature>
<feature type="active site" description="Proton acceptor" evidence="1">
    <location>
        <position position="247"/>
    </location>
</feature>
<feature type="active site" description="Nucleophile" evidence="1">
    <location>
        <position position="281"/>
    </location>
</feature>
<feature type="active site" description="Charge relay system" evidence="1">
    <location>
        <position position="459"/>
    </location>
</feature>
<feature type="binding site" evidence="1">
    <location>
        <position position="23"/>
    </location>
    <ligand>
        <name>K(+)</name>
        <dbReference type="ChEBI" id="CHEBI:29103"/>
        <label>1</label>
    </ligand>
</feature>
<feature type="binding site" evidence="1">
    <location>
        <position position="90"/>
    </location>
    <ligand>
        <name>K(+)</name>
        <dbReference type="ChEBI" id="CHEBI:29103"/>
        <label>1</label>
    </ligand>
</feature>
<feature type="binding site" evidence="1">
    <location>
        <begin position="147"/>
        <end position="149"/>
    </location>
    <ligand>
        <name>NAD(+)</name>
        <dbReference type="ChEBI" id="CHEBI:57540"/>
    </ligand>
</feature>
<feature type="binding site" evidence="1">
    <location>
        <begin position="173"/>
        <end position="176"/>
    </location>
    <ligand>
        <name>NAD(+)</name>
        <dbReference type="ChEBI" id="CHEBI:57540"/>
    </ligand>
</feature>
<feature type="binding site" evidence="1">
    <location>
        <begin position="226"/>
        <end position="229"/>
    </location>
    <ligand>
        <name>NAD(+)</name>
        <dbReference type="ChEBI" id="CHEBI:57540"/>
    </ligand>
</feature>
<feature type="binding site" evidence="1">
    <location>
        <position position="241"/>
    </location>
    <ligand>
        <name>K(+)</name>
        <dbReference type="ChEBI" id="CHEBI:29103"/>
        <label>2</label>
    </ligand>
</feature>
<feature type="binding site" evidence="1">
    <location>
        <position position="249"/>
    </location>
    <ligand>
        <name>NAD(+)</name>
        <dbReference type="ChEBI" id="CHEBI:57540"/>
    </ligand>
</feature>
<feature type="binding site" description="covalent" evidence="1">
    <location>
        <position position="281"/>
    </location>
    <ligand>
        <name>NAD(+)</name>
        <dbReference type="ChEBI" id="CHEBI:57540"/>
    </ligand>
</feature>
<feature type="binding site" evidence="1">
    <location>
        <position position="382"/>
    </location>
    <ligand>
        <name>NAD(+)</name>
        <dbReference type="ChEBI" id="CHEBI:57540"/>
    </ligand>
</feature>
<feature type="binding site" evidence="1">
    <location>
        <position position="452"/>
    </location>
    <ligand>
        <name>K(+)</name>
        <dbReference type="ChEBI" id="CHEBI:29103"/>
        <label>2</label>
    </ligand>
</feature>
<feature type="binding site" evidence="1">
    <location>
        <position position="455"/>
    </location>
    <ligand>
        <name>K(+)</name>
        <dbReference type="ChEBI" id="CHEBI:29103"/>
        <label>2</label>
    </ligand>
</feature>
<feature type="modified residue" description="Cysteine sulfenic acid (-SOH)" evidence="1">
    <location>
        <position position="281"/>
    </location>
</feature>
<gene>
    <name evidence="1" type="primary">betB</name>
    <name type="ordered locus">VPA1113</name>
</gene>
<comment type="function">
    <text evidence="1">Involved in the biosynthesis of the osmoprotectant glycine betaine. Catalyzes the irreversible oxidation of betaine aldehyde to the corresponding acid.</text>
</comment>
<comment type="catalytic activity">
    <reaction evidence="1">
        <text>betaine aldehyde + NAD(+) + H2O = glycine betaine + NADH + 2 H(+)</text>
        <dbReference type="Rhea" id="RHEA:15305"/>
        <dbReference type="ChEBI" id="CHEBI:15377"/>
        <dbReference type="ChEBI" id="CHEBI:15378"/>
        <dbReference type="ChEBI" id="CHEBI:15710"/>
        <dbReference type="ChEBI" id="CHEBI:17750"/>
        <dbReference type="ChEBI" id="CHEBI:57540"/>
        <dbReference type="ChEBI" id="CHEBI:57945"/>
        <dbReference type="EC" id="1.2.1.8"/>
    </reaction>
    <physiologicalReaction direction="left-to-right" evidence="1">
        <dbReference type="Rhea" id="RHEA:15306"/>
    </physiologicalReaction>
</comment>
<comment type="cofactor">
    <cofactor evidence="1">
        <name>K(+)</name>
        <dbReference type="ChEBI" id="CHEBI:29103"/>
    </cofactor>
    <text evidence="1">Binds 2 potassium ions per subunit.</text>
</comment>
<comment type="pathway">
    <text evidence="1">Amine and polyamine biosynthesis; betaine biosynthesis via choline pathway; betaine from betaine aldehyde: step 1/1.</text>
</comment>
<comment type="subunit">
    <text evidence="1">Dimer of dimers.</text>
</comment>
<comment type="similarity">
    <text evidence="1">Belongs to the aldehyde dehydrogenase family.</text>
</comment>
<name>BETB_VIBPA</name>
<protein>
    <recommendedName>
        <fullName evidence="1">Betaine aldehyde dehydrogenase</fullName>
        <shortName evidence="1">BADH</shortName>
        <ecNumber evidence="1">1.2.1.8</ecNumber>
    </recommendedName>
</protein>
<organism>
    <name type="scientific">Vibrio parahaemolyticus serotype O3:K6 (strain RIMD 2210633)</name>
    <dbReference type="NCBI Taxonomy" id="223926"/>
    <lineage>
        <taxon>Bacteria</taxon>
        <taxon>Pseudomonadati</taxon>
        <taxon>Pseudomonadota</taxon>
        <taxon>Gammaproteobacteria</taxon>
        <taxon>Vibrionales</taxon>
        <taxon>Vibrionaceae</taxon>
        <taxon>Vibrio</taxon>
    </lineage>
</organism>
<keyword id="KW-0479">Metal-binding</keyword>
<keyword id="KW-0520">NAD</keyword>
<keyword id="KW-0521">NADP</keyword>
<keyword id="KW-0558">Oxidation</keyword>
<keyword id="KW-0560">Oxidoreductase</keyword>
<keyword id="KW-0630">Potassium</keyword>
<sequence length="486" mass="52618">MEMKTHYIDGAMYIGCSEEHFTTYNPANGEPLANIKQANQSDMEAAIESAKRGFEVWSAMTAIERSRILNKAVAILRERNDELAALEVADTGKPIQEAIAVDITTGADVIEYYAGLAPSLQGEQQPLNENQFFYTRREPLGICAGIGAWNYPIQIAMWKSAPALAAGNAMIFKPSEETPLTALKLAEIYSEAGLPDGVFNVVQGDYRVGQMLTAHPDIAKVSFTGESGTGKVVMGDSAKTLKQVTMELGGKSPLIVFDDAKLDDAVSAAMVANFYTQGEVCTNGTRVFVHESIYDDFVAQLKTRTEKLVVGDPLDENTQIGALISKEHESKVLSAIESAKASGATLLTGGYKVTDNGLQNGNFVAPTVFIDCDDSMSHVQQEIFGPVMSVLKFSEEAEVIERANDTDYGLAAGVFTQNLSRAHRVIHKIQAGICWVNAWGDSPAEMPVGGYKQSGIGRENGVETLKHYTQTKSVLVQLSDFESPYA</sequence>
<dbReference type="EC" id="1.2.1.8" evidence="1"/>
<dbReference type="EMBL" id="BA000032">
    <property type="protein sequence ID" value="BAC62456.1"/>
    <property type="molecule type" value="Genomic_DNA"/>
</dbReference>
<dbReference type="RefSeq" id="NP_800623.1">
    <property type="nucleotide sequence ID" value="NC_004605.1"/>
</dbReference>
<dbReference type="RefSeq" id="WP_005477313.1">
    <property type="nucleotide sequence ID" value="NC_004605.1"/>
</dbReference>
<dbReference type="SMR" id="Q87H52"/>
<dbReference type="GeneID" id="1191809"/>
<dbReference type="KEGG" id="vpa:VPA1113"/>
<dbReference type="PATRIC" id="fig|223926.6.peg.4039"/>
<dbReference type="eggNOG" id="COG1012">
    <property type="taxonomic scope" value="Bacteria"/>
</dbReference>
<dbReference type="HOGENOM" id="CLU_005391_0_0_6"/>
<dbReference type="UniPathway" id="UPA00529">
    <property type="reaction ID" value="UER00386"/>
</dbReference>
<dbReference type="Proteomes" id="UP000002493">
    <property type="component" value="Chromosome 2"/>
</dbReference>
<dbReference type="GO" id="GO:0008802">
    <property type="term" value="F:betaine-aldehyde dehydrogenase (NAD+) activity"/>
    <property type="evidence" value="ECO:0007669"/>
    <property type="project" value="UniProtKB-UniRule"/>
</dbReference>
<dbReference type="GO" id="GO:0046872">
    <property type="term" value="F:metal ion binding"/>
    <property type="evidence" value="ECO:0007669"/>
    <property type="project" value="UniProtKB-KW"/>
</dbReference>
<dbReference type="GO" id="GO:0019285">
    <property type="term" value="P:glycine betaine biosynthetic process from choline"/>
    <property type="evidence" value="ECO:0007669"/>
    <property type="project" value="UniProtKB-UniRule"/>
</dbReference>
<dbReference type="CDD" id="cd07090">
    <property type="entry name" value="ALDH_F9_TMBADH"/>
    <property type="match status" value="1"/>
</dbReference>
<dbReference type="FunFam" id="3.40.605.10:FF:000026">
    <property type="entry name" value="Aldehyde dehydrogenase, putative"/>
    <property type="match status" value="1"/>
</dbReference>
<dbReference type="FunFam" id="3.40.309.10:FF:000014">
    <property type="entry name" value="NAD/NADP-dependent betaine aldehyde dehydrogenase"/>
    <property type="match status" value="1"/>
</dbReference>
<dbReference type="FunFam" id="3.40.605.10:FF:000007">
    <property type="entry name" value="NAD/NADP-dependent betaine aldehyde dehydrogenase"/>
    <property type="match status" value="1"/>
</dbReference>
<dbReference type="Gene3D" id="3.40.605.10">
    <property type="entry name" value="Aldehyde Dehydrogenase, Chain A, domain 1"/>
    <property type="match status" value="1"/>
</dbReference>
<dbReference type="Gene3D" id="3.40.309.10">
    <property type="entry name" value="Aldehyde Dehydrogenase, Chain A, domain 2"/>
    <property type="match status" value="1"/>
</dbReference>
<dbReference type="HAMAP" id="MF_00804">
    <property type="entry name" value="BADH"/>
    <property type="match status" value="1"/>
</dbReference>
<dbReference type="InterPro" id="IPR016161">
    <property type="entry name" value="Ald_DH/histidinol_DH"/>
</dbReference>
<dbReference type="InterPro" id="IPR016163">
    <property type="entry name" value="Ald_DH_C"/>
</dbReference>
<dbReference type="InterPro" id="IPR016160">
    <property type="entry name" value="Ald_DH_CS_CYS"/>
</dbReference>
<dbReference type="InterPro" id="IPR029510">
    <property type="entry name" value="Ald_DH_CS_GLU"/>
</dbReference>
<dbReference type="InterPro" id="IPR016162">
    <property type="entry name" value="Ald_DH_N"/>
</dbReference>
<dbReference type="InterPro" id="IPR015590">
    <property type="entry name" value="Aldehyde_DH_dom"/>
</dbReference>
<dbReference type="InterPro" id="IPR011264">
    <property type="entry name" value="BADH"/>
</dbReference>
<dbReference type="NCBIfam" id="TIGR01804">
    <property type="entry name" value="BADH"/>
    <property type="match status" value="1"/>
</dbReference>
<dbReference type="NCBIfam" id="NF009725">
    <property type="entry name" value="PRK13252.1"/>
    <property type="match status" value="1"/>
</dbReference>
<dbReference type="PANTHER" id="PTHR11699">
    <property type="entry name" value="ALDEHYDE DEHYDROGENASE-RELATED"/>
    <property type="match status" value="1"/>
</dbReference>
<dbReference type="Pfam" id="PF00171">
    <property type="entry name" value="Aldedh"/>
    <property type="match status" value="1"/>
</dbReference>
<dbReference type="SUPFAM" id="SSF53720">
    <property type="entry name" value="ALDH-like"/>
    <property type="match status" value="1"/>
</dbReference>
<dbReference type="PROSITE" id="PS00070">
    <property type="entry name" value="ALDEHYDE_DEHYDR_CYS"/>
    <property type="match status" value="1"/>
</dbReference>
<dbReference type="PROSITE" id="PS00687">
    <property type="entry name" value="ALDEHYDE_DEHYDR_GLU"/>
    <property type="match status" value="1"/>
</dbReference>
<reference key="1">
    <citation type="journal article" date="2003" name="Lancet">
        <title>Genome sequence of Vibrio parahaemolyticus: a pathogenic mechanism distinct from that of V. cholerae.</title>
        <authorList>
            <person name="Makino K."/>
            <person name="Oshima K."/>
            <person name="Kurokawa K."/>
            <person name="Yokoyama K."/>
            <person name="Uda T."/>
            <person name="Tagomori K."/>
            <person name="Iijima Y."/>
            <person name="Najima M."/>
            <person name="Nakano M."/>
            <person name="Yamashita A."/>
            <person name="Kubota Y."/>
            <person name="Kimura S."/>
            <person name="Yasunaga T."/>
            <person name="Honda T."/>
            <person name="Shinagawa H."/>
            <person name="Hattori M."/>
            <person name="Iida T."/>
        </authorList>
    </citation>
    <scope>NUCLEOTIDE SEQUENCE [LARGE SCALE GENOMIC DNA]</scope>
    <source>
        <strain>RIMD 2210633</strain>
    </source>
</reference>
<proteinExistence type="inferred from homology"/>
<accession>Q87H52</accession>